<protein>
    <recommendedName>
        <fullName evidence="9">11-beta-hydroxysteroid dehydrogenase</fullName>
        <ecNumber evidence="7">1.1.1.146</ecNumber>
    </recommendedName>
    <alternativeName>
        <fullName evidence="9">17-beta-hydroxysteroid dehydrogenase</fullName>
        <ecNumber evidence="7">1.1.1.62</ecNumber>
    </alternativeName>
    <alternativeName>
        <fullName evidence="8 10">Steroleosin</fullName>
    </alternativeName>
</protein>
<keyword id="KW-0903">Direct protein sequencing</keyword>
<keyword id="KW-0551">Lipid droplet</keyword>
<keyword id="KW-0472">Membrane</keyword>
<keyword id="KW-0521">NADP</keyword>
<keyword id="KW-0560">Oxidoreductase</keyword>
<keyword id="KW-0735">Signal-anchor</keyword>
<keyword id="KW-0812">Transmembrane</keyword>
<keyword id="KW-1133">Transmembrane helix</keyword>
<name>HSD_PINMS</name>
<evidence type="ECO:0000250" key="1">
    <source>
        <dbReference type="UniProtKB" id="P14061"/>
    </source>
</evidence>
<evidence type="ECO:0000250" key="2">
    <source>
        <dbReference type="UniProtKB" id="P28845"/>
    </source>
</evidence>
<evidence type="ECO:0000250" key="3">
    <source>
        <dbReference type="UniProtKB" id="Q93W57"/>
    </source>
</evidence>
<evidence type="ECO:0000255" key="4"/>
<evidence type="ECO:0000255" key="5">
    <source>
        <dbReference type="PROSITE-ProRule" id="PRU10001"/>
    </source>
</evidence>
<evidence type="ECO:0000255" key="6">
    <source>
        <dbReference type="RuleBase" id="RU000363"/>
    </source>
</evidence>
<evidence type="ECO:0000269" key="7">
    <source>
    </source>
</evidence>
<evidence type="ECO:0000303" key="8">
    <source>
    </source>
</evidence>
<evidence type="ECO:0000305" key="9"/>
<evidence type="ECO:0000312" key="10">
    <source>
        <dbReference type="EMBL" id="AML81109.1"/>
    </source>
</evidence>
<organism>
    <name type="scientific">Pinus massoniana</name>
    <name type="common">Chinese red pine</name>
    <dbReference type="NCBI Taxonomy" id="88730"/>
    <lineage>
        <taxon>Eukaryota</taxon>
        <taxon>Viridiplantae</taxon>
        <taxon>Streptophyta</taxon>
        <taxon>Embryophyta</taxon>
        <taxon>Tracheophyta</taxon>
        <taxon>Spermatophyta</taxon>
        <taxon>Pinopsida</taxon>
        <taxon>Pinidae</taxon>
        <taxon>Conifers I</taxon>
        <taxon>Pinales</taxon>
        <taxon>Pinaceae</taxon>
        <taxon>Pinus</taxon>
        <taxon>Pinus subgen. Pinus</taxon>
    </lineage>
</organism>
<comment type="function">
    <text evidence="7">Has dehydrogenase activity against corticosterone (11 beta-hydroxysteroid) and estradiol (17 beta-hydroxysteroid) in the presence of NADP(+). May be involved in signal transduction regulated by various sterols.</text>
</comment>
<comment type="catalytic activity">
    <reaction evidence="7">
        <text>an 11beta-hydroxysteroid + NADP(+) = an 11-oxosteroid + NADPH + H(+)</text>
        <dbReference type="Rhea" id="RHEA:11388"/>
        <dbReference type="ChEBI" id="CHEBI:15378"/>
        <dbReference type="ChEBI" id="CHEBI:35346"/>
        <dbReference type="ChEBI" id="CHEBI:47787"/>
        <dbReference type="ChEBI" id="CHEBI:57783"/>
        <dbReference type="ChEBI" id="CHEBI:58349"/>
        <dbReference type="EC" id="1.1.1.146"/>
    </reaction>
</comment>
<comment type="catalytic activity">
    <reaction evidence="7">
        <text>corticosterone + NADP(+) = 11-dehydrocorticosterone + NADPH + H(+)</text>
        <dbReference type="Rhea" id="RHEA:42200"/>
        <dbReference type="ChEBI" id="CHEBI:15378"/>
        <dbReference type="ChEBI" id="CHEBI:16827"/>
        <dbReference type="ChEBI" id="CHEBI:57783"/>
        <dbReference type="ChEBI" id="CHEBI:58349"/>
        <dbReference type="ChEBI" id="CHEBI:78600"/>
    </reaction>
</comment>
<comment type="catalytic activity">
    <reaction evidence="7">
        <text>17beta-estradiol + NADP(+) = estrone + NADPH + H(+)</text>
        <dbReference type="Rhea" id="RHEA:24616"/>
        <dbReference type="ChEBI" id="CHEBI:15378"/>
        <dbReference type="ChEBI" id="CHEBI:16469"/>
        <dbReference type="ChEBI" id="CHEBI:17263"/>
        <dbReference type="ChEBI" id="CHEBI:57783"/>
        <dbReference type="ChEBI" id="CHEBI:58349"/>
        <dbReference type="EC" id="1.1.1.62"/>
    </reaction>
</comment>
<comment type="subcellular location">
    <subcellularLocation>
        <location evidence="7">Lipid droplet</location>
    </subcellularLocation>
    <subcellularLocation>
        <location evidence="4">Membrane</location>
        <topology evidence="9">Single-pass type II membrane protein</topology>
    </subcellularLocation>
    <text evidence="9">Surface of oil bodies. Exists at a monolayer lipid/water interface.</text>
</comment>
<comment type="tissue specificity">
    <text evidence="7">Expressed in megagametophytes (at protein level).</text>
</comment>
<comment type="domain">
    <text evidence="3">The proline-knob motif may be involved in the targeting to oil bodies.</text>
</comment>
<comment type="similarity">
    <text evidence="6">Belongs to the short-chain dehydrogenases/reductases (SDR) family.</text>
</comment>
<feature type="chain" id="PRO_0000449961" description="11-beta-hydroxysteroid dehydrogenase">
    <location>
        <begin position="1"/>
        <end position="356"/>
    </location>
</feature>
<feature type="transmembrane region" description="Helical; Signal-anchor for type II membrane protein" evidence="4">
    <location>
        <begin position="10"/>
        <end position="30"/>
    </location>
</feature>
<feature type="short sequence motif" description="Proline-knob" evidence="3">
    <location>
        <begin position="13"/>
        <end position="26"/>
    </location>
</feature>
<feature type="active site" description="Proton acceptor" evidence="5">
    <location>
        <position position="197"/>
    </location>
</feature>
<feature type="binding site" evidence="1">
    <location>
        <begin position="54"/>
        <end position="85"/>
    </location>
    <ligand>
        <name>NADP(+)</name>
        <dbReference type="ChEBI" id="CHEBI:58349"/>
    </ligand>
</feature>
<feature type="binding site" evidence="2">
    <location>
        <position position="184"/>
    </location>
    <ligand>
        <name>substrate</name>
    </ligand>
</feature>
<feature type="binding site" evidence="2">
    <location>
        <begin position="197"/>
        <end position="201"/>
    </location>
    <ligand>
        <name>NADP(+)</name>
        <dbReference type="ChEBI" id="CHEBI:58349"/>
    </ligand>
</feature>
<feature type="binding site" evidence="1">
    <location>
        <position position="201"/>
    </location>
    <ligand>
        <name>NADP(+)</name>
        <dbReference type="ChEBI" id="CHEBI:58349"/>
    </ligand>
</feature>
<feature type="mutagenesis site" description="Loss of binding to plant derived cholesterol, cholest-5-en-3beta-ol." evidence="7">
    <location>
        <begin position="206"/>
        <end position="356"/>
    </location>
</feature>
<dbReference type="EC" id="1.1.1.146" evidence="7"/>
<dbReference type="EC" id="1.1.1.62" evidence="7"/>
<dbReference type="EMBL" id="KT731102">
    <property type="protein sequence ID" value="AML81109.1"/>
    <property type="molecule type" value="mRNA"/>
</dbReference>
<dbReference type="SMR" id="A0A140FAN3"/>
<dbReference type="GO" id="GO:0005829">
    <property type="term" value="C:cytosol"/>
    <property type="evidence" value="ECO:0007669"/>
    <property type="project" value="TreeGrafter"/>
</dbReference>
<dbReference type="GO" id="GO:0005811">
    <property type="term" value="C:lipid droplet"/>
    <property type="evidence" value="ECO:0007669"/>
    <property type="project" value="UniProtKB-SubCell"/>
</dbReference>
<dbReference type="GO" id="GO:0016020">
    <property type="term" value="C:membrane"/>
    <property type="evidence" value="ECO:0007669"/>
    <property type="project" value="UniProtKB-SubCell"/>
</dbReference>
<dbReference type="GO" id="GO:0070524">
    <property type="term" value="F:11-beta-hydroxysteroid dehydrogenase (NADP+) activity"/>
    <property type="evidence" value="ECO:0007669"/>
    <property type="project" value="UniProtKB-EC"/>
</dbReference>
<dbReference type="GO" id="GO:0004303">
    <property type="term" value="F:estradiol 17-beta-dehydrogenase [NAD(P)+] activity"/>
    <property type="evidence" value="ECO:0007669"/>
    <property type="project" value="UniProtKB-EC"/>
</dbReference>
<dbReference type="Gene3D" id="3.40.50.720">
    <property type="entry name" value="NAD(P)-binding Rossmann-like Domain"/>
    <property type="match status" value="1"/>
</dbReference>
<dbReference type="InterPro" id="IPR036291">
    <property type="entry name" value="NAD(P)-bd_dom_sf"/>
</dbReference>
<dbReference type="InterPro" id="IPR020904">
    <property type="entry name" value="Sc_DH/Rdtase_CS"/>
</dbReference>
<dbReference type="InterPro" id="IPR002347">
    <property type="entry name" value="SDR_fam"/>
</dbReference>
<dbReference type="NCBIfam" id="NF004825">
    <property type="entry name" value="PRK06181.1"/>
    <property type="match status" value="1"/>
</dbReference>
<dbReference type="PANTHER" id="PTHR43391:SF14">
    <property type="entry name" value="DEHYDROGENASE_REDUCTASE SDR FAMILY PROTEIN 7-LIKE"/>
    <property type="match status" value="1"/>
</dbReference>
<dbReference type="PANTHER" id="PTHR43391">
    <property type="entry name" value="RETINOL DEHYDROGENASE-RELATED"/>
    <property type="match status" value="1"/>
</dbReference>
<dbReference type="Pfam" id="PF00106">
    <property type="entry name" value="adh_short"/>
    <property type="match status" value="1"/>
</dbReference>
<dbReference type="PRINTS" id="PR00081">
    <property type="entry name" value="GDHRDH"/>
</dbReference>
<dbReference type="PRINTS" id="PR00080">
    <property type="entry name" value="SDRFAMILY"/>
</dbReference>
<dbReference type="SUPFAM" id="SSF51735">
    <property type="entry name" value="NAD(P)-binding Rossmann-fold domains"/>
    <property type="match status" value="1"/>
</dbReference>
<dbReference type="PROSITE" id="PS00061">
    <property type="entry name" value="ADH_SHORT"/>
    <property type="match status" value="1"/>
</dbReference>
<accession>A0A140FAN3</accession>
<reference evidence="10" key="1">
    <citation type="journal article" date="2016" name="Plant Physiol. Biochem.">
        <title>Identification of steroleosin in oil bodies of pine megagametophytes.</title>
        <authorList>
            <person name="Pasaribu B."/>
            <person name="Chen C.-S."/>
            <person name="Liao Y.K."/>
            <person name="Jiang P.-L."/>
            <person name="Tzen J.T.C."/>
        </authorList>
    </citation>
    <scope>NUCLEOTIDE SEQUENCE [MRNA]</scope>
    <scope>PROTEIN SEQUENCE OF 32-38; 72-79; 194-201; 253-269 AND 270-277</scope>
    <scope>FUNCTION</scope>
    <scope>CATALYTIC ACTIVITY</scope>
    <scope>SUBCELLULAR LOCATION</scope>
    <scope>TISSUE SPECIFICITY</scope>
    <scope>MUTAGENESIS OF 206-SER--GLU-356</scope>
    <source>
        <tissue evidence="8">Megagametophyte</tissue>
    </source>
</reference>
<sequence>MDVMNFLLNLVVPPAGLLMLAFAWPSLAFFRACEWALRIIYGEDMEGKVVIITGASSGIGEQIAYQYAKRRANLVLVARREHRLRSIREKARTLGAKNVLVIAADVVKEEDCKRFIDETINQYGHLDHLVNNAGLGHSFLFEEASDTSGFAHMMDINFWGSVYPTFFALPHLRRRNGRIIVNASVEGWLPMPRMSLYNAAKAAVVSFYETLRIEIGGAIDITIATPGWIESDMTRGRFMTEEGEVLFKEEPREMYVGPYPVAYTEECARTIVSGACKGQRYVRFPMWYNVFFLYRVFVPDLLDWTYRLLFLNHFITTASKDHTLHDFKGARKKLLITPTSLQLLHHQQHQSPKSSE</sequence>
<proteinExistence type="evidence at protein level"/>